<feature type="chain" id="PRO_0000261171" description="Tektin-5">
    <location>
        <begin position="1"/>
        <end position="485"/>
    </location>
</feature>
<feature type="coiled-coil region" evidence="2">
    <location>
        <begin position="114"/>
        <end position="185"/>
    </location>
</feature>
<feature type="coiled-coil region" evidence="2">
    <location>
        <begin position="225"/>
        <end position="247"/>
    </location>
</feature>
<feature type="coiled-coil region" evidence="2">
    <location>
        <begin position="307"/>
        <end position="385"/>
    </location>
</feature>
<feature type="coiled-coil region" evidence="2">
    <location>
        <begin position="421"/>
        <end position="444"/>
    </location>
</feature>
<feature type="sequence variant" id="VAR_053722" description="In dbSNP:rs16957557.">
    <original>A</original>
    <variation>T</variation>
    <location>
        <position position="59"/>
    </location>
</feature>
<feature type="sequence variant" id="VAR_053723" description="In dbSNP:rs16957546.">
    <original>H</original>
    <variation>R</variation>
    <location>
        <position position="196"/>
    </location>
</feature>
<feature type="sequence variant" id="VAR_053724" description="In dbSNP:rs17684500.">
    <original>M</original>
    <variation>T</variation>
    <location>
        <position position="239"/>
    </location>
</feature>
<feature type="sequence variant" id="VAR_053725" description="In dbSNP:rs2719710.">
    <original>Q</original>
    <variation>R</variation>
    <location>
        <position position="315"/>
    </location>
</feature>
<comment type="function">
    <text evidence="1">Sperm-specific microtubule inner protein (MIP) part of the dynein-decorated doublet microtubules (DMTs) in flagellar axoneme. Forms an extensive interaction network in different conformations that reinforces the helix bundle composed by other tektin proteins (TEKT1 to TEKT4) and MIPs to anchor the tektin bundle onto the tubulin wall of A-tubule of the sperm flagellum.</text>
</comment>
<comment type="subunit">
    <text evidence="1 3">Microtubule inner protein component of sperm flagellar doublet microtubules (By similarity). Interacts with TEKT3 (PubMed:36708031).</text>
</comment>
<comment type="interaction">
    <interactant intactId="EBI-10239812">
        <id>Q96M29</id>
    </interactant>
    <interactant intactId="EBI-11976299">
        <id>Q5BKX5-3</id>
        <label>ACTMAP</label>
    </interactant>
    <organismsDiffer>false</organismsDiffer>
    <experiments>3</experiments>
</comment>
<comment type="interaction">
    <interactant intactId="EBI-10239812">
        <id>Q96M29</id>
    </interactant>
    <interactant intactId="EBI-357530">
        <id>Q9ULX6</id>
        <label>AKAP8L</label>
    </interactant>
    <organismsDiffer>false</organismsDiffer>
    <experiments>3</experiments>
</comment>
<comment type="interaction">
    <interactant intactId="EBI-10239812">
        <id>Q96M29</id>
    </interactant>
    <interactant intactId="EBI-2949658">
        <id>O95429</id>
        <label>BAG4</label>
    </interactant>
    <organismsDiffer>false</organismsDiffer>
    <experiments>3</experiments>
</comment>
<comment type="interaction">
    <interactant intactId="EBI-10239812">
        <id>Q96M29</id>
    </interactant>
    <interactant intactId="EBI-12011224">
        <id>Q9NPB3</id>
        <label>CABP2</label>
    </interactant>
    <organismsDiffer>false</organismsDiffer>
    <experiments>3</experiments>
</comment>
<comment type="interaction">
    <interactant intactId="EBI-10239812">
        <id>Q96M29</id>
    </interactant>
    <interactant intactId="EBI-12842046">
        <id>A8MUP2</id>
        <label>CSKMT</label>
    </interactant>
    <organismsDiffer>false</organismsDiffer>
    <experiments>3</experiments>
</comment>
<comment type="interaction">
    <interactant intactId="EBI-10239812">
        <id>Q96M29</id>
    </interactant>
    <interactant intactId="EBI-740376">
        <id>Q86UW9</id>
        <label>DTX2</label>
    </interactant>
    <organismsDiffer>false</organismsDiffer>
    <experiments>3</experiments>
</comment>
<comment type="interaction">
    <interactant intactId="EBI-10239812">
        <id>Q96M29</id>
    </interactant>
    <interactant intactId="EBI-10182490">
        <id>O15197-2</id>
        <label>EPHB6</label>
    </interactant>
    <organismsDiffer>false</organismsDiffer>
    <experiments>3</experiments>
</comment>
<comment type="interaction">
    <interactant intactId="EBI-10239812">
        <id>Q96M29</id>
    </interactant>
    <interactant intactId="EBI-12807776">
        <id>O00167-2</id>
        <label>EYA2</label>
    </interactant>
    <organismsDiffer>false</organismsDiffer>
    <experiments>3</experiments>
</comment>
<comment type="interaction">
    <interactant intactId="EBI-10239812">
        <id>Q96M29</id>
    </interactant>
    <interactant intactId="EBI-10242151">
        <id>Q53EP0-3</id>
        <label>FNDC3B</label>
    </interactant>
    <organismsDiffer>false</organismsDiffer>
    <experiments>3</experiments>
</comment>
<comment type="interaction">
    <interactant intactId="EBI-10239812">
        <id>Q96M29</id>
    </interactant>
    <interactant intactId="EBI-1759806">
        <id>O75593</id>
        <label>FOXH1</label>
    </interactant>
    <organismsDiffer>false</organismsDiffer>
    <experiments>3</experiments>
</comment>
<comment type="interaction">
    <interactant intactId="EBI-10239812">
        <id>Q96M29</id>
    </interactant>
    <interactant intactId="EBI-12018822">
        <id>Q12951-2</id>
        <label>FOXI1</label>
    </interactant>
    <organismsDiffer>false</organismsDiffer>
    <experiments>3</experiments>
</comment>
<comment type="interaction">
    <interactant intactId="EBI-10239812">
        <id>Q96M29</id>
    </interactant>
    <interactant intactId="EBI-740220">
        <id>O14964</id>
        <label>HGS</label>
    </interactant>
    <organismsDiffer>false</organismsDiffer>
    <experiments>3</experiments>
</comment>
<comment type="interaction">
    <interactant intactId="EBI-10239812">
        <id>Q96M29</id>
    </interactant>
    <interactant intactId="EBI-740785">
        <id>P49639</id>
        <label>HOXA1</label>
    </interactant>
    <organismsDiffer>false</organismsDiffer>
    <experiments>3</experiments>
</comment>
<comment type="interaction">
    <interactant intactId="EBI-10239812">
        <id>Q96M29</id>
    </interactant>
    <interactant intactId="EBI-741308">
        <id>P17509</id>
        <label>HOXB6</label>
    </interactant>
    <organismsDiffer>false</organismsDiffer>
    <experiments>3</experiments>
</comment>
<comment type="interaction">
    <interactant intactId="EBI-10239812">
        <id>Q96M29</id>
    </interactant>
    <interactant intactId="EBI-6426443">
        <id>Q2WGJ6</id>
        <label>KLHL38</label>
    </interactant>
    <organismsDiffer>false</organismsDiffer>
    <experiments>3</experiments>
</comment>
<comment type="interaction">
    <interactant intactId="EBI-10239812">
        <id>Q96M29</id>
    </interactant>
    <interactant intactId="EBI-10176396">
        <id>P60329</id>
        <label>KRTAP12-4</label>
    </interactant>
    <organismsDiffer>false</organismsDiffer>
    <experiments>3</experiments>
</comment>
<comment type="interaction">
    <interactant intactId="EBI-10239812">
        <id>Q96M29</id>
    </interactant>
    <interactant intactId="EBI-11992140">
        <id>Q3LI76</id>
        <label>KRTAP15-1</label>
    </interactant>
    <organismsDiffer>false</organismsDiffer>
    <experiments>3</experiments>
</comment>
<comment type="interaction">
    <interactant intactId="EBI-10239812">
        <id>Q96M29</id>
    </interactant>
    <interactant intactId="EBI-12805508">
        <id>Q3LI70</id>
        <label>KRTAP19-6</label>
    </interactant>
    <organismsDiffer>false</organismsDiffer>
    <experiments>3</experiments>
</comment>
<comment type="interaction">
    <interactant intactId="EBI-10239812">
        <id>Q96M29</id>
    </interactant>
    <interactant intactId="EBI-10241353">
        <id>Q3SYF9</id>
        <label>KRTAP19-7</label>
    </interactant>
    <organismsDiffer>false</organismsDiffer>
    <experiments>3</experiments>
</comment>
<comment type="interaction">
    <interactant intactId="EBI-10239812">
        <id>Q96M29</id>
    </interactant>
    <interactant intactId="EBI-11962084">
        <id>Q3LI66</id>
        <label>KRTAP6-2</label>
    </interactant>
    <organismsDiffer>false</organismsDiffer>
    <experiments>3</experiments>
</comment>
<comment type="interaction">
    <interactant intactId="EBI-10239812">
        <id>Q96M29</id>
    </interactant>
    <interactant intactId="EBI-9088686">
        <id>Q14847-2</id>
        <label>LASP1</label>
    </interactant>
    <organismsDiffer>false</organismsDiffer>
    <experiments>3</experiments>
</comment>
<comment type="interaction">
    <interactant intactId="EBI-10239812">
        <id>Q96M29</id>
    </interactant>
    <interactant intactId="EBI-947402">
        <id>O60336</id>
        <label>MAPKBP1</label>
    </interactant>
    <organismsDiffer>false</organismsDiffer>
    <experiments>3</experiments>
</comment>
<comment type="interaction">
    <interactant intactId="EBI-10239812">
        <id>Q96M29</id>
    </interactant>
    <interactant intactId="EBI-10271199">
        <id>Q8NI38</id>
        <label>NFKBID</label>
    </interactant>
    <organismsDiffer>false</organismsDiffer>
    <experiments>3</experiments>
</comment>
<comment type="interaction">
    <interactant intactId="EBI-10239812">
        <id>Q96M29</id>
    </interactant>
    <interactant intactId="EBI-10697320">
        <id>Q8NBF2-2</id>
        <label>NHLRC2</label>
    </interactant>
    <organismsDiffer>false</organismsDiffer>
    <experiments>3</experiments>
</comment>
<comment type="interaction">
    <interactant intactId="EBI-10239812">
        <id>Q96M29</id>
    </interactant>
    <interactant intactId="EBI-748265">
        <id>P78337</id>
        <label>PITX1</label>
    </interactant>
    <organismsDiffer>false</organismsDiffer>
    <experiments>5</experiments>
</comment>
<comment type="interaction">
    <interactant intactId="EBI-10239812">
        <id>Q96M29</id>
    </interactant>
    <interactant intactId="EBI-769257">
        <id>Q9NRQ2</id>
        <label>PLSCR4</label>
    </interactant>
    <organismsDiffer>false</organismsDiffer>
    <experiments>3</experiments>
</comment>
<comment type="interaction">
    <interactant intactId="EBI-10239812">
        <id>Q96M29</id>
    </interactant>
    <interactant intactId="EBI-9027467">
        <id>O75360</id>
        <label>PROP1</label>
    </interactant>
    <organismsDiffer>false</organismsDiffer>
    <experiments>3</experiments>
</comment>
<comment type="interaction">
    <interactant intactId="EBI-10239812">
        <id>Q96M29</id>
    </interactant>
    <interactant intactId="EBI-603350">
        <id>P28070</id>
        <label>PSMB4</label>
    </interactant>
    <organismsDiffer>false</organismsDiffer>
    <experiments>3</experiments>
</comment>
<comment type="interaction">
    <interactant intactId="EBI-10239812">
        <id>Q96M29</id>
    </interactant>
    <interactant intactId="EBI-2798044">
        <id>Q2TAL8</id>
        <label>QRICH1</label>
    </interactant>
    <organismsDiffer>false</organismsDiffer>
    <experiments>3</experiments>
</comment>
<comment type="interaction">
    <interactant intactId="EBI-10239812">
        <id>Q96M29</id>
    </interactant>
    <interactant intactId="EBI-740343">
        <id>Q93062-3</id>
        <label>RBPMS</label>
    </interactant>
    <organismsDiffer>false</organismsDiffer>
    <experiments>3</experiments>
</comment>
<comment type="interaction">
    <interactant intactId="EBI-10239812">
        <id>Q96M29</id>
    </interactant>
    <interactant intactId="EBI-18560266">
        <id>Q92753-1</id>
        <label>RORB</label>
    </interactant>
    <organismsDiffer>false</organismsDiffer>
    <experiments>3</experiments>
</comment>
<comment type="interaction">
    <interactant intactId="EBI-10239812">
        <id>Q96M29</id>
    </interactant>
    <interactant intactId="EBI-12001422">
        <id>Q01196-8</id>
        <label>RUNX1</label>
    </interactant>
    <organismsDiffer>false</organismsDiffer>
    <experiments>3</experiments>
</comment>
<comment type="interaction">
    <interactant intactId="EBI-10239812">
        <id>Q96M29</id>
    </interactant>
    <interactant intactId="EBI-12275818">
        <id>Q53HV7-2</id>
        <label>SMUG1</label>
    </interactant>
    <organismsDiffer>false</organismsDiffer>
    <experiments>3</experiments>
</comment>
<comment type="interaction">
    <interactant intactId="EBI-10239812">
        <id>Q96M29</id>
    </interactant>
    <interactant intactId="EBI-11959123">
        <id>Q99932-2</id>
        <label>SPAG8</label>
    </interactant>
    <organismsDiffer>false</organismsDiffer>
    <experiments>3</experiments>
</comment>
<comment type="interaction">
    <interactant intactId="EBI-10239812">
        <id>Q96M29</id>
    </interactant>
    <interactant intactId="EBI-10174456">
        <id>Q8N865</id>
        <label>SPMIP4</label>
    </interactant>
    <organismsDiffer>false</organismsDiffer>
    <experiments>3</experiments>
</comment>
<comment type="interaction">
    <interactant intactId="EBI-10239812">
        <id>Q96M29</id>
    </interactant>
    <interactant intactId="EBI-10191361">
        <id>Q96SF7</id>
        <label>TBX15</label>
    </interactant>
    <organismsDiffer>false</organismsDiffer>
    <experiments>3</experiments>
</comment>
<comment type="interaction">
    <interactant intactId="EBI-10239812">
        <id>Q96M29</id>
    </interactant>
    <interactant intactId="EBI-3939165">
        <id>O43711</id>
        <label>TLX3</label>
    </interactant>
    <organismsDiffer>false</organismsDiffer>
    <experiments>3</experiments>
</comment>
<comment type="interaction">
    <interactant intactId="EBI-10239812">
        <id>Q96M29</id>
    </interactant>
    <interactant intactId="EBI-949753">
        <id>Q63HR2</id>
        <label>TNS2</label>
    </interactant>
    <organismsDiffer>false</organismsDiffer>
    <experiments>6</experiments>
</comment>
<comment type="interaction">
    <interactant intactId="EBI-10239812">
        <id>Q96M29</id>
    </interactant>
    <interactant intactId="EBI-12815137">
        <id>Q96NM4-3</id>
        <label>TOX2</label>
    </interactant>
    <organismsDiffer>false</organismsDiffer>
    <experiments>3</experiments>
</comment>
<comment type="interaction">
    <interactant intactId="EBI-10239812">
        <id>Q96M29</id>
    </interactant>
    <interactant intactId="EBI-11975223">
        <id>Q70EL1-9</id>
        <label>USP54</label>
    </interactant>
    <organismsDiffer>false</organismsDiffer>
    <experiments>3</experiments>
</comment>
<comment type="interaction">
    <interactant intactId="EBI-10239812">
        <id>Q96M29</id>
    </interactant>
    <interactant intactId="EBI-10191303">
        <id>O95231</id>
        <label>VENTX</label>
    </interactant>
    <organismsDiffer>false</organismsDiffer>
    <experiments>3</experiments>
</comment>
<comment type="interaction">
    <interactant intactId="EBI-10239812">
        <id>Q96M29</id>
    </interactant>
    <interactant intactId="EBI-12030590">
        <id>Q9H0C1</id>
        <label>ZMYND12</label>
    </interactant>
    <organismsDiffer>false</organismsDiffer>
    <experiments>5</experiments>
</comment>
<comment type="interaction">
    <interactant intactId="EBI-10239812">
        <id>Q96M29</id>
    </interactant>
    <interactant intactId="EBI-7254550">
        <id>P36508</id>
        <label>ZNF76</label>
    </interactant>
    <organismsDiffer>false</organismsDiffer>
    <experiments>3</experiments>
</comment>
<comment type="subcellular location">
    <subcellularLocation>
        <location evidence="1">Cytoplasm</location>
        <location evidence="1">Cytoskeleton</location>
        <location evidence="1">Flagellum axoneme</location>
    </subcellularLocation>
</comment>
<comment type="PTM">
    <text evidence="1">Ubiquitinated, leading to its degradation. Deubiquitinated by USP16, promoting its stability.</text>
</comment>
<comment type="similarity">
    <text evidence="4">Belongs to the tektin family.</text>
</comment>
<organism>
    <name type="scientific">Homo sapiens</name>
    <name type="common">Human</name>
    <dbReference type="NCBI Taxonomy" id="9606"/>
    <lineage>
        <taxon>Eukaryota</taxon>
        <taxon>Metazoa</taxon>
        <taxon>Chordata</taxon>
        <taxon>Craniata</taxon>
        <taxon>Vertebrata</taxon>
        <taxon>Euteleostomi</taxon>
        <taxon>Mammalia</taxon>
        <taxon>Eutheria</taxon>
        <taxon>Euarchontoglires</taxon>
        <taxon>Primates</taxon>
        <taxon>Haplorrhini</taxon>
        <taxon>Catarrhini</taxon>
        <taxon>Hominidae</taxon>
        <taxon>Homo</taxon>
    </lineage>
</organism>
<gene>
    <name type="primary">TEKT5</name>
</gene>
<keyword id="KW-0966">Cell projection</keyword>
<keyword id="KW-0969">Cilium</keyword>
<keyword id="KW-0175">Coiled coil</keyword>
<keyword id="KW-0963">Cytoplasm</keyword>
<keyword id="KW-0206">Cytoskeleton</keyword>
<keyword id="KW-0282">Flagellum</keyword>
<keyword id="KW-1267">Proteomics identification</keyword>
<keyword id="KW-1185">Reference proteome</keyword>
<keyword id="KW-0832">Ubl conjugation</keyword>
<dbReference type="EMBL" id="AK057433">
    <property type="protein sequence ID" value="BAB71484.1"/>
    <property type="molecule type" value="mRNA"/>
</dbReference>
<dbReference type="EMBL" id="BC130336">
    <property type="protein sequence ID" value="AAI30337.1"/>
    <property type="molecule type" value="mRNA"/>
</dbReference>
<dbReference type="EMBL" id="BC130338">
    <property type="protein sequence ID" value="AAI30339.1"/>
    <property type="molecule type" value="mRNA"/>
</dbReference>
<dbReference type="CCDS" id="CCDS10542.1"/>
<dbReference type="RefSeq" id="NP_653275.1">
    <property type="nucleotide sequence ID" value="NM_144674.2"/>
</dbReference>
<dbReference type="SMR" id="Q96M29"/>
<dbReference type="BioGRID" id="126976">
    <property type="interactions" value="51"/>
</dbReference>
<dbReference type="FunCoup" id="Q96M29">
    <property type="interactions" value="47"/>
</dbReference>
<dbReference type="IntAct" id="Q96M29">
    <property type="interactions" value="46"/>
</dbReference>
<dbReference type="STRING" id="9606.ENSP00000283025"/>
<dbReference type="GlyGen" id="Q96M29">
    <property type="glycosylation" value="2 sites, 1 O-linked glycan (2 sites)"/>
</dbReference>
<dbReference type="iPTMnet" id="Q96M29"/>
<dbReference type="PhosphoSitePlus" id="Q96M29"/>
<dbReference type="BioMuta" id="TEKT5"/>
<dbReference type="DMDM" id="74732290"/>
<dbReference type="MassIVE" id="Q96M29"/>
<dbReference type="PaxDb" id="9606-ENSP00000283025"/>
<dbReference type="PeptideAtlas" id="Q96M29"/>
<dbReference type="ProteomicsDB" id="77289"/>
<dbReference type="Antibodypedia" id="52193">
    <property type="antibodies" value="165 antibodies from 24 providers"/>
</dbReference>
<dbReference type="DNASU" id="146279"/>
<dbReference type="Ensembl" id="ENST00000283025.7">
    <property type="protein sequence ID" value="ENSP00000283025.2"/>
    <property type="gene ID" value="ENSG00000153060.8"/>
</dbReference>
<dbReference type="GeneID" id="146279"/>
<dbReference type="KEGG" id="hsa:146279"/>
<dbReference type="MANE-Select" id="ENST00000283025.7">
    <property type="protein sequence ID" value="ENSP00000283025.2"/>
    <property type="RefSeq nucleotide sequence ID" value="NM_144674.2"/>
    <property type="RefSeq protein sequence ID" value="NP_653275.1"/>
</dbReference>
<dbReference type="UCSC" id="uc002czz.2">
    <property type="organism name" value="human"/>
</dbReference>
<dbReference type="AGR" id="HGNC:26554"/>
<dbReference type="CTD" id="146279"/>
<dbReference type="DisGeNET" id="146279"/>
<dbReference type="GeneCards" id="TEKT5"/>
<dbReference type="HGNC" id="HGNC:26554">
    <property type="gene designation" value="TEKT5"/>
</dbReference>
<dbReference type="HPA" id="ENSG00000153060">
    <property type="expression patterns" value="Tissue enriched (testis)"/>
</dbReference>
<dbReference type="MIM" id="618686">
    <property type="type" value="gene"/>
</dbReference>
<dbReference type="neXtProt" id="NX_Q96M29"/>
<dbReference type="OpenTargets" id="ENSG00000153060"/>
<dbReference type="PharmGKB" id="PA162405603"/>
<dbReference type="VEuPathDB" id="HostDB:ENSG00000153060"/>
<dbReference type="eggNOG" id="KOG2685">
    <property type="taxonomic scope" value="Eukaryota"/>
</dbReference>
<dbReference type="GeneTree" id="ENSGT00950000182894"/>
<dbReference type="HOGENOM" id="CLU_033588_2_1_1"/>
<dbReference type="InParanoid" id="Q96M29"/>
<dbReference type="OMA" id="IANVQTC"/>
<dbReference type="OrthoDB" id="9886517at2759"/>
<dbReference type="PAN-GO" id="Q96M29">
    <property type="GO annotations" value="4 GO annotations based on evolutionary models"/>
</dbReference>
<dbReference type="PhylomeDB" id="Q96M29"/>
<dbReference type="TreeFam" id="TF320754"/>
<dbReference type="PathwayCommons" id="Q96M29"/>
<dbReference type="SignaLink" id="Q96M29"/>
<dbReference type="BioGRID-ORCS" id="146279">
    <property type="hits" value="7 hits in 1145 CRISPR screens"/>
</dbReference>
<dbReference type="ChiTaRS" id="TEKT5">
    <property type="organism name" value="human"/>
</dbReference>
<dbReference type="GenomeRNAi" id="146279"/>
<dbReference type="Pharos" id="Q96M29">
    <property type="development level" value="Tbio"/>
</dbReference>
<dbReference type="PRO" id="PR:Q96M29"/>
<dbReference type="Proteomes" id="UP000005640">
    <property type="component" value="Chromosome 16"/>
</dbReference>
<dbReference type="RNAct" id="Q96M29">
    <property type="molecule type" value="protein"/>
</dbReference>
<dbReference type="Bgee" id="ENSG00000153060">
    <property type="expression patterns" value="Expressed in left testis and 106 other cell types or tissues"/>
</dbReference>
<dbReference type="ExpressionAtlas" id="Q96M29">
    <property type="expression patterns" value="baseline and differential"/>
</dbReference>
<dbReference type="GO" id="GO:0160111">
    <property type="term" value="C:axonemal A tubule inner sheath"/>
    <property type="evidence" value="ECO:0000250"/>
    <property type="project" value="UniProtKB"/>
</dbReference>
<dbReference type="GO" id="GO:0015630">
    <property type="term" value="C:microtubule cytoskeleton"/>
    <property type="evidence" value="ECO:0000318"/>
    <property type="project" value="GO_Central"/>
</dbReference>
<dbReference type="GO" id="GO:0005634">
    <property type="term" value="C:nucleus"/>
    <property type="evidence" value="ECO:0007005"/>
    <property type="project" value="UniProtKB"/>
</dbReference>
<dbReference type="GO" id="GO:0036126">
    <property type="term" value="C:sperm flagellum"/>
    <property type="evidence" value="ECO:0000250"/>
    <property type="project" value="UniProtKB"/>
</dbReference>
<dbReference type="GO" id="GO:0060271">
    <property type="term" value="P:cilium assembly"/>
    <property type="evidence" value="ECO:0000318"/>
    <property type="project" value="GO_Central"/>
</dbReference>
<dbReference type="GO" id="GO:0060294">
    <property type="term" value="P:cilium movement involved in cell motility"/>
    <property type="evidence" value="ECO:0000318"/>
    <property type="project" value="GO_Central"/>
</dbReference>
<dbReference type="GO" id="GO:0030317">
    <property type="term" value="P:flagellated sperm motility"/>
    <property type="evidence" value="ECO:0000250"/>
    <property type="project" value="UniProtKB"/>
</dbReference>
<dbReference type="InterPro" id="IPR048256">
    <property type="entry name" value="Tektin-like"/>
</dbReference>
<dbReference type="InterPro" id="IPR000435">
    <property type="entry name" value="Tektins"/>
</dbReference>
<dbReference type="PANTHER" id="PTHR19960">
    <property type="entry name" value="TEKTIN"/>
    <property type="match status" value="1"/>
</dbReference>
<dbReference type="PANTHER" id="PTHR19960:SF23">
    <property type="entry name" value="TEKTIN-5"/>
    <property type="match status" value="1"/>
</dbReference>
<dbReference type="Pfam" id="PF03148">
    <property type="entry name" value="Tektin"/>
    <property type="match status" value="1"/>
</dbReference>
<dbReference type="PRINTS" id="PR00511">
    <property type="entry name" value="TEKTIN"/>
</dbReference>
<reference key="1">
    <citation type="journal article" date="2004" name="Nat. Genet.">
        <title>Complete sequencing and characterization of 21,243 full-length human cDNAs.</title>
        <authorList>
            <person name="Ota T."/>
            <person name="Suzuki Y."/>
            <person name="Nishikawa T."/>
            <person name="Otsuki T."/>
            <person name="Sugiyama T."/>
            <person name="Irie R."/>
            <person name="Wakamatsu A."/>
            <person name="Hayashi K."/>
            <person name="Sato H."/>
            <person name="Nagai K."/>
            <person name="Kimura K."/>
            <person name="Makita H."/>
            <person name="Sekine M."/>
            <person name="Obayashi M."/>
            <person name="Nishi T."/>
            <person name="Shibahara T."/>
            <person name="Tanaka T."/>
            <person name="Ishii S."/>
            <person name="Yamamoto J."/>
            <person name="Saito K."/>
            <person name="Kawai Y."/>
            <person name="Isono Y."/>
            <person name="Nakamura Y."/>
            <person name="Nagahari K."/>
            <person name="Murakami K."/>
            <person name="Yasuda T."/>
            <person name="Iwayanagi T."/>
            <person name="Wagatsuma M."/>
            <person name="Shiratori A."/>
            <person name="Sudo H."/>
            <person name="Hosoiri T."/>
            <person name="Kaku Y."/>
            <person name="Kodaira H."/>
            <person name="Kondo H."/>
            <person name="Sugawara M."/>
            <person name="Takahashi M."/>
            <person name="Kanda K."/>
            <person name="Yokoi T."/>
            <person name="Furuya T."/>
            <person name="Kikkawa E."/>
            <person name="Omura Y."/>
            <person name="Abe K."/>
            <person name="Kamihara K."/>
            <person name="Katsuta N."/>
            <person name="Sato K."/>
            <person name="Tanikawa M."/>
            <person name="Yamazaki M."/>
            <person name="Ninomiya K."/>
            <person name="Ishibashi T."/>
            <person name="Yamashita H."/>
            <person name="Murakawa K."/>
            <person name="Fujimori K."/>
            <person name="Tanai H."/>
            <person name="Kimata M."/>
            <person name="Watanabe M."/>
            <person name="Hiraoka S."/>
            <person name="Chiba Y."/>
            <person name="Ishida S."/>
            <person name="Ono Y."/>
            <person name="Takiguchi S."/>
            <person name="Watanabe S."/>
            <person name="Yosida M."/>
            <person name="Hotuta T."/>
            <person name="Kusano J."/>
            <person name="Kanehori K."/>
            <person name="Takahashi-Fujii A."/>
            <person name="Hara H."/>
            <person name="Tanase T.-O."/>
            <person name="Nomura Y."/>
            <person name="Togiya S."/>
            <person name="Komai F."/>
            <person name="Hara R."/>
            <person name="Takeuchi K."/>
            <person name="Arita M."/>
            <person name="Imose N."/>
            <person name="Musashino K."/>
            <person name="Yuuki H."/>
            <person name="Oshima A."/>
            <person name="Sasaki N."/>
            <person name="Aotsuka S."/>
            <person name="Yoshikawa Y."/>
            <person name="Matsunawa H."/>
            <person name="Ichihara T."/>
            <person name="Shiohata N."/>
            <person name="Sano S."/>
            <person name="Moriya S."/>
            <person name="Momiyama H."/>
            <person name="Satoh N."/>
            <person name="Takami S."/>
            <person name="Terashima Y."/>
            <person name="Suzuki O."/>
            <person name="Nakagawa S."/>
            <person name="Senoh A."/>
            <person name="Mizoguchi H."/>
            <person name="Goto Y."/>
            <person name="Shimizu F."/>
            <person name="Wakebe H."/>
            <person name="Hishigaki H."/>
            <person name="Watanabe T."/>
            <person name="Sugiyama A."/>
            <person name="Takemoto M."/>
            <person name="Kawakami B."/>
            <person name="Yamazaki M."/>
            <person name="Watanabe K."/>
            <person name="Kumagai A."/>
            <person name="Itakura S."/>
            <person name="Fukuzumi Y."/>
            <person name="Fujimori Y."/>
            <person name="Komiyama M."/>
            <person name="Tashiro H."/>
            <person name="Tanigami A."/>
            <person name="Fujiwara T."/>
            <person name="Ono T."/>
            <person name="Yamada K."/>
            <person name="Fujii Y."/>
            <person name="Ozaki K."/>
            <person name="Hirao M."/>
            <person name="Ohmori Y."/>
            <person name="Kawabata A."/>
            <person name="Hikiji T."/>
            <person name="Kobatake N."/>
            <person name="Inagaki H."/>
            <person name="Ikema Y."/>
            <person name="Okamoto S."/>
            <person name="Okitani R."/>
            <person name="Kawakami T."/>
            <person name="Noguchi S."/>
            <person name="Itoh T."/>
            <person name="Shigeta K."/>
            <person name="Senba T."/>
            <person name="Matsumura K."/>
            <person name="Nakajima Y."/>
            <person name="Mizuno T."/>
            <person name="Morinaga M."/>
            <person name="Sasaki M."/>
            <person name="Togashi T."/>
            <person name="Oyama M."/>
            <person name="Hata H."/>
            <person name="Watanabe M."/>
            <person name="Komatsu T."/>
            <person name="Mizushima-Sugano J."/>
            <person name="Satoh T."/>
            <person name="Shirai Y."/>
            <person name="Takahashi Y."/>
            <person name="Nakagawa K."/>
            <person name="Okumura K."/>
            <person name="Nagase T."/>
            <person name="Nomura N."/>
            <person name="Kikuchi H."/>
            <person name="Masuho Y."/>
            <person name="Yamashita R."/>
            <person name="Nakai K."/>
            <person name="Yada T."/>
            <person name="Nakamura Y."/>
            <person name="Ohara O."/>
            <person name="Isogai T."/>
            <person name="Sugano S."/>
        </authorList>
    </citation>
    <scope>NUCLEOTIDE SEQUENCE [LARGE SCALE MRNA]</scope>
    <source>
        <tissue>Testis</tissue>
    </source>
</reference>
<reference key="2">
    <citation type="journal article" date="2004" name="Genome Res.">
        <title>The status, quality, and expansion of the NIH full-length cDNA project: the Mammalian Gene Collection (MGC).</title>
        <authorList>
            <consortium name="The MGC Project Team"/>
        </authorList>
    </citation>
    <scope>NUCLEOTIDE SEQUENCE [LARGE SCALE MRNA]</scope>
    <source>
        <tissue>Brain</tissue>
    </source>
</reference>
<reference key="3">
    <citation type="journal article" date="2023" name="Hum. Mol. Genet.">
        <title>Bi-allelic human TEKT3 mutations cause male infertility with oligoasthenoteratozoospermia due to acrosomal hypoplasia and reduced progressive motility.</title>
        <authorList>
            <person name="Liu Y."/>
            <person name="Li Y."/>
            <person name="Meng L."/>
            <person name="Li K."/>
            <person name="Gao Y."/>
            <person name="Lv M."/>
            <person name="Guo R."/>
            <person name="Xu Y."/>
            <person name="Zhou P."/>
            <person name="Wei Z."/>
            <person name="He X."/>
            <person name="Cao Y."/>
            <person name="Wu H."/>
            <person name="Tan Y."/>
            <person name="Hua R."/>
        </authorList>
    </citation>
    <scope>INTERACTION WITH TEKT3</scope>
</reference>
<protein>
    <recommendedName>
        <fullName>Tektin-5</fullName>
    </recommendedName>
</protein>
<evidence type="ECO:0000250" key="1">
    <source>
        <dbReference type="UniProtKB" id="G5E8A8"/>
    </source>
</evidence>
<evidence type="ECO:0000255" key="2"/>
<evidence type="ECO:0000269" key="3">
    <source>
    </source>
</evidence>
<evidence type="ECO:0000305" key="4"/>
<accession>Q96M29</accession>
<accession>A1L3Z3</accession>
<proteinExistence type="evidence at protein level"/>
<sequence length="485" mass="56294">MEFLGTTQTASYCGPKKCCGLTSLPAVQAPVIQECYQPYYLPGYRYLNSWRPSLFYKIANVQTCPDESTSTLRPPTILPTLRSALFSRYSPHDWDQSNQLQVRGAEASRLWASRLTDDSMRLLQDKDQLTHQMQEGTCRNLGQRLSDIGFWKSELSYELDRLLTENQNLETVKRRLECAANEVNCPLQVALECLYHREKRIGIDLVHDNVEKNLIREVDLLKCCQEQMRKLAQRIDIQMRDNRDAQHVLERDLEDKSSAQCIDEKCFNLRNTSDCISFFHGMEKIDGTISVPETWAKFSNDNIKHSQNMRANSIQLREEAEHLFETLSDQMWRQFTDTNLAFNARISEVTDVKNKLQTQLAKTLQEIFQAENTIMLLERSIMAKEGPLKVAQTRLECRTRRPNMELCRDIPQLKLVNEVFTIDDTLQTLKLRLRETQDTLQLLVMTKCRLEHELAIKANTLCIDKEKCMGMRKTFPCTPRLVGHT</sequence>
<name>TEKT5_HUMAN</name>